<protein>
    <recommendedName>
        <fullName evidence="1">Translation initiation factor IF-1</fullName>
    </recommendedName>
</protein>
<sequence>MSKEDLIEFTGTVMELLPNAMFRVTLDNEHTILAHTSGKMRKNRIRVLAGDRVNVEMTPYDLSKGRITFRFK</sequence>
<feature type="chain" id="PRO_0000095795" description="Translation initiation factor IF-1">
    <location>
        <begin position="1"/>
        <end position="72"/>
    </location>
</feature>
<feature type="domain" description="S1-like" evidence="1">
    <location>
        <begin position="1"/>
        <end position="72"/>
    </location>
</feature>
<reference key="1">
    <citation type="journal article" date="2005" name="Nat. Biotechnol.">
        <title>Complete genome sequence of the acetic acid bacterium Gluconobacter oxydans.</title>
        <authorList>
            <person name="Prust C."/>
            <person name="Hoffmeister M."/>
            <person name="Liesegang H."/>
            <person name="Wiezer A."/>
            <person name="Fricke W.F."/>
            <person name="Ehrenreich A."/>
            <person name="Gottschalk G."/>
            <person name="Deppenmeier U."/>
        </authorList>
    </citation>
    <scope>NUCLEOTIDE SEQUENCE [LARGE SCALE GENOMIC DNA]</scope>
    <source>
        <strain>621H</strain>
    </source>
</reference>
<proteinExistence type="inferred from homology"/>
<gene>
    <name evidence="1" type="primary">infA</name>
    <name type="ordered locus">GOX1002</name>
</gene>
<comment type="function">
    <text evidence="1">One of the essential components for the initiation of protein synthesis. Stabilizes the binding of IF-2 and IF-3 on the 30S subunit to which N-formylmethionyl-tRNA(fMet) subsequently binds. Helps modulate mRNA selection, yielding the 30S pre-initiation complex (PIC). Upon addition of the 50S ribosomal subunit IF-1, IF-2 and IF-3 are released leaving the mature 70S translation initiation complex.</text>
</comment>
<comment type="subunit">
    <text evidence="1">Component of the 30S ribosomal translation pre-initiation complex which assembles on the 30S ribosome in the order IF-2 and IF-3, IF-1 and N-formylmethionyl-tRNA(fMet); mRNA recruitment can occur at any time during PIC assembly.</text>
</comment>
<comment type="subcellular location">
    <subcellularLocation>
        <location evidence="1">Cytoplasm</location>
    </subcellularLocation>
</comment>
<comment type="similarity">
    <text evidence="1">Belongs to the IF-1 family.</text>
</comment>
<evidence type="ECO:0000255" key="1">
    <source>
        <dbReference type="HAMAP-Rule" id="MF_00075"/>
    </source>
</evidence>
<name>IF1_GLUOX</name>
<keyword id="KW-0963">Cytoplasm</keyword>
<keyword id="KW-0396">Initiation factor</keyword>
<keyword id="KW-0648">Protein biosynthesis</keyword>
<keyword id="KW-1185">Reference proteome</keyword>
<keyword id="KW-0694">RNA-binding</keyword>
<keyword id="KW-0699">rRNA-binding</keyword>
<dbReference type="EMBL" id="CP000009">
    <property type="protein sequence ID" value="AAW60774.1"/>
    <property type="molecule type" value="Genomic_DNA"/>
</dbReference>
<dbReference type="RefSeq" id="WP_007282896.1">
    <property type="nucleotide sequence ID" value="NZ_LT900338.1"/>
</dbReference>
<dbReference type="SMR" id="Q5FS72"/>
<dbReference type="STRING" id="290633.GOX1002"/>
<dbReference type="GeneID" id="89650071"/>
<dbReference type="KEGG" id="gox:GOX1002"/>
<dbReference type="eggNOG" id="COG0361">
    <property type="taxonomic scope" value="Bacteria"/>
</dbReference>
<dbReference type="HOGENOM" id="CLU_151267_1_0_5"/>
<dbReference type="Proteomes" id="UP000006375">
    <property type="component" value="Chromosome"/>
</dbReference>
<dbReference type="GO" id="GO:0005829">
    <property type="term" value="C:cytosol"/>
    <property type="evidence" value="ECO:0007669"/>
    <property type="project" value="TreeGrafter"/>
</dbReference>
<dbReference type="GO" id="GO:0043022">
    <property type="term" value="F:ribosome binding"/>
    <property type="evidence" value="ECO:0007669"/>
    <property type="project" value="UniProtKB-UniRule"/>
</dbReference>
<dbReference type="GO" id="GO:0019843">
    <property type="term" value="F:rRNA binding"/>
    <property type="evidence" value="ECO:0007669"/>
    <property type="project" value="UniProtKB-UniRule"/>
</dbReference>
<dbReference type="GO" id="GO:0003743">
    <property type="term" value="F:translation initiation factor activity"/>
    <property type="evidence" value="ECO:0007669"/>
    <property type="project" value="UniProtKB-UniRule"/>
</dbReference>
<dbReference type="CDD" id="cd04451">
    <property type="entry name" value="S1_IF1"/>
    <property type="match status" value="1"/>
</dbReference>
<dbReference type="FunFam" id="2.40.50.140:FF:000002">
    <property type="entry name" value="Translation initiation factor IF-1"/>
    <property type="match status" value="1"/>
</dbReference>
<dbReference type="Gene3D" id="2.40.50.140">
    <property type="entry name" value="Nucleic acid-binding proteins"/>
    <property type="match status" value="1"/>
</dbReference>
<dbReference type="HAMAP" id="MF_00075">
    <property type="entry name" value="IF_1"/>
    <property type="match status" value="1"/>
</dbReference>
<dbReference type="InterPro" id="IPR012340">
    <property type="entry name" value="NA-bd_OB-fold"/>
</dbReference>
<dbReference type="InterPro" id="IPR006196">
    <property type="entry name" value="RNA-binding_domain_S1_IF1"/>
</dbReference>
<dbReference type="InterPro" id="IPR003029">
    <property type="entry name" value="S1_domain"/>
</dbReference>
<dbReference type="InterPro" id="IPR004368">
    <property type="entry name" value="TIF_IF1"/>
</dbReference>
<dbReference type="NCBIfam" id="TIGR00008">
    <property type="entry name" value="infA"/>
    <property type="match status" value="1"/>
</dbReference>
<dbReference type="PANTHER" id="PTHR33370">
    <property type="entry name" value="TRANSLATION INITIATION FACTOR IF-1, CHLOROPLASTIC"/>
    <property type="match status" value="1"/>
</dbReference>
<dbReference type="PANTHER" id="PTHR33370:SF1">
    <property type="entry name" value="TRANSLATION INITIATION FACTOR IF-1, CHLOROPLASTIC"/>
    <property type="match status" value="1"/>
</dbReference>
<dbReference type="Pfam" id="PF01176">
    <property type="entry name" value="eIF-1a"/>
    <property type="match status" value="1"/>
</dbReference>
<dbReference type="SMART" id="SM00316">
    <property type="entry name" value="S1"/>
    <property type="match status" value="1"/>
</dbReference>
<dbReference type="SUPFAM" id="SSF50249">
    <property type="entry name" value="Nucleic acid-binding proteins"/>
    <property type="match status" value="1"/>
</dbReference>
<dbReference type="PROSITE" id="PS50832">
    <property type="entry name" value="S1_IF1_TYPE"/>
    <property type="match status" value="1"/>
</dbReference>
<organism>
    <name type="scientific">Gluconobacter oxydans (strain 621H)</name>
    <name type="common">Gluconobacter suboxydans</name>
    <dbReference type="NCBI Taxonomy" id="290633"/>
    <lineage>
        <taxon>Bacteria</taxon>
        <taxon>Pseudomonadati</taxon>
        <taxon>Pseudomonadota</taxon>
        <taxon>Alphaproteobacteria</taxon>
        <taxon>Acetobacterales</taxon>
        <taxon>Acetobacteraceae</taxon>
        <taxon>Gluconobacter</taxon>
    </lineage>
</organism>
<accession>Q5FS72</accession>